<feature type="chain" id="PRO_0000187226" description="Ribonucleoside-diphosphate reductase subunit alpha">
    <location>
        <begin position="1"/>
        <end position="754"/>
    </location>
</feature>
<feature type="domain" description="ATP-cone" evidence="2">
    <location>
        <begin position="4"/>
        <end position="93"/>
    </location>
</feature>
<feature type="region of interest" description="Disordered" evidence="3">
    <location>
        <begin position="621"/>
        <end position="641"/>
    </location>
</feature>
<feature type="active site" description="Proton acceptor" evidence="1">
    <location>
        <position position="435"/>
    </location>
</feature>
<feature type="active site" description="Cysteine radical intermediate" evidence="1">
    <location>
        <position position="437"/>
    </location>
</feature>
<feature type="active site" description="Proton acceptor" evidence="1">
    <location>
        <position position="439"/>
    </location>
</feature>
<feature type="binding site" evidence="1">
    <location>
        <position position="206"/>
    </location>
    <ligand>
        <name>substrate</name>
    </ligand>
</feature>
<feature type="binding site" evidence="1">
    <location>
        <begin position="221"/>
        <end position="222"/>
    </location>
    <ligand>
        <name>substrate</name>
    </ligand>
</feature>
<feature type="binding site" evidence="1">
    <location>
        <position position="250"/>
    </location>
    <ligand>
        <name>substrate</name>
    </ligand>
</feature>
<feature type="binding site" evidence="1">
    <location>
        <begin position="435"/>
        <end position="439"/>
    </location>
    <ligand>
        <name>substrate</name>
    </ligand>
</feature>
<feature type="binding site" evidence="1">
    <location>
        <begin position="615"/>
        <end position="619"/>
    </location>
    <ligand>
        <name>substrate</name>
    </ligand>
</feature>
<feature type="site" description="Important for hydrogen atom transfer" evidence="1">
    <location>
        <position position="222"/>
    </location>
</feature>
<feature type="site" description="Allosteric effector binding" evidence="1">
    <location>
        <position position="229"/>
    </location>
</feature>
<feature type="site" description="Allosteric effector binding" evidence="1">
    <location>
        <position position="259"/>
    </location>
</feature>
<feature type="site" description="Important for hydrogen atom transfer" evidence="1">
    <location>
        <position position="457"/>
    </location>
</feature>
<feature type="site" description="Important for electron transfer" evidence="1">
    <location>
        <position position="726"/>
    </location>
</feature>
<feature type="site" description="Important for electron transfer" evidence="1">
    <location>
        <position position="727"/>
    </location>
</feature>
<feature type="site" description="Interacts with thioredoxin/glutaredoxin" evidence="1">
    <location>
        <position position="749"/>
    </location>
</feature>
<feature type="site" description="Interacts with thioredoxin/glutaredoxin" evidence="1">
    <location>
        <position position="752"/>
    </location>
</feature>
<feature type="disulfide bond" description="Redox-active" evidence="1">
    <location>
        <begin position="222"/>
        <end position="457"/>
    </location>
</feature>
<organismHost>
    <name type="scientific">Escherichia coli</name>
    <dbReference type="NCBI Taxonomy" id="562"/>
</organismHost>
<accession>P32282</accession>
<protein>
    <recommendedName>
        <fullName>Ribonucleoside-diphosphate reductase subunit alpha</fullName>
        <ecNumber>1.17.4.1</ecNumber>
    </recommendedName>
    <alternativeName>
        <fullName>Protein B1</fullName>
    </alternativeName>
    <alternativeName>
        <fullName>Ribonucleotide reductase</fullName>
    </alternativeName>
</protein>
<comment type="function">
    <text>Provides the precursors necessary for DNA synthesis. Catalyzes the biosynthesis of deoxyribonucleotides from the corresponding ribonucleotides.</text>
</comment>
<comment type="catalytic activity">
    <reaction>
        <text>a 2'-deoxyribonucleoside 5'-diphosphate + [thioredoxin]-disulfide + H2O = a ribonucleoside 5'-diphosphate + [thioredoxin]-dithiol</text>
        <dbReference type="Rhea" id="RHEA:23252"/>
        <dbReference type="Rhea" id="RHEA-COMP:10698"/>
        <dbReference type="Rhea" id="RHEA-COMP:10700"/>
        <dbReference type="ChEBI" id="CHEBI:15377"/>
        <dbReference type="ChEBI" id="CHEBI:29950"/>
        <dbReference type="ChEBI" id="CHEBI:50058"/>
        <dbReference type="ChEBI" id="CHEBI:57930"/>
        <dbReference type="ChEBI" id="CHEBI:73316"/>
        <dbReference type="EC" id="1.17.4.1"/>
    </reaction>
</comment>
<comment type="activity regulation">
    <text evidence="1">Under complex allosteric control mediated by deoxynucleoside triphosphates and ATP binding. The type of nucleotide bound at the specificity site determines substrate preference. It seems probable that ATP makes the enzyme reduce CDP and UDP, dGTP favors ADP reduction and dTTP favors GDP reduction (By similarity).</text>
</comment>
<comment type="subunit">
    <text>Heterodimer of a large and a small subunit.</text>
</comment>
<comment type="similarity">
    <text evidence="4">Belongs to the ribonucleoside diphosphate reductase large chain family.</text>
</comment>
<organism>
    <name type="scientific">Enterobacteria phage T4</name>
    <name type="common">Bacteriophage T4</name>
    <dbReference type="NCBI Taxonomy" id="10665"/>
    <lineage>
        <taxon>Viruses</taxon>
        <taxon>Duplodnaviria</taxon>
        <taxon>Heunggongvirae</taxon>
        <taxon>Uroviricota</taxon>
        <taxon>Caudoviricetes</taxon>
        <taxon>Straboviridae</taxon>
        <taxon>Tevenvirinae</taxon>
        <taxon>Tequatrovirus</taxon>
    </lineage>
</organism>
<keyword id="KW-0021">Allosteric enzyme</keyword>
<keyword id="KW-0067">ATP-binding</keyword>
<keyword id="KW-0215">Deoxyribonucleotide synthesis</keyword>
<keyword id="KW-1015">Disulfide bond</keyword>
<keyword id="KW-0547">Nucleotide-binding</keyword>
<keyword id="KW-0560">Oxidoreductase</keyword>
<keyword id="KW-1185">Reference proteome</keyword>
<gene>
    <name type="primary">NRDA</name>
</gene>
<sequence>MQLINVIKSSGVSQSFDPQKIIKVLSWAAEGTSVDPYELYENIKSYLRDGMTTDDIQTIVIKAAANSISVEEPDYQYVAARCLMFALRKHVYGQYEPRSFIDHISYCVNAGKYDPELLSKYSAEEITFLESKIKHERDMEFTYSGAMQLKEKYLVKDKTTGQIYETPQFAFMTIGMALHQDEPVDRLKHVIRFYEAVSTRQISLPTPIMAGCRTPTRQFSSCVVIEAGDSLKSINKASASIVEYISKRAGIGINVGMIRAEGSKIGMGEVRHTGVIPFWKHFQTAVKSCSQGGIRGGAATAYYPIWHLEVENLLVLKNNKGVEENRIRHMDYGVQLNDLMMERFGKNDYITLFSPHEMGGELYYSYFKDQDRFRELYEAAEKDPNIRKKRIKARELFELLMTERSGTARIYVQFIDNTNNYTPFIREKAPIRQSNLCCEIAIPTNDVNSPDAEIGLCTLSAFVLDNFDWQDQDKINELAEVQVRALDNLLDYQGYPVPEAEKAKKRRNLGVGVTNYAAWLASNFASYEDANDLTHELFERLQYGLIKASIKLAKEKGPSEYYSDTRWSRGELPIDWYNKKIDQIAAPKYVCDWSALREDLKLFGIRNSTLSALMPCESSSQVSNSTNGYEPPRGPVSVKESKEGSFNQVVPNIEHNIDLYDYTWKLAKKGNKPYLTQVAIMLKWVCQSASANTYYDPQIFPKGKVPMSIMIDDMLYGWYYGIKNFYYHNTRDGSGTDDYEIETPKADDCAACKL</sequence>
<name>RIR1_BPT4</name>
<dbReference type="EC" id="1.17.4.1"/>
<dbReference type="EMBL" id="J03968">
    <property type="protein sequence ID" value="AAA32527.1"/>
    <property type="molecule type" value="Genomic_DNA"/>
</dbReference>
<dbReference type="EMBL" id="AF158101">
    <property type="protein sequence ID" value="AAD42621.1"/>
    <property type="molecule type" value="Genomic_DNA"/>
</dbReference>
<dbReference type="EMBL" id="M22627">
    <property type="protein sequence ID" value="AAA32531.1"/>
    <property type="molecule type" value="Genomic_DNA"/>
</dbReference>
<dbReference type="RefSeq" id="NP_049845.1">
    <property type="nucleotide sequence ID" value="NC_000866.4"/>
</dbReference>
<dbReference type="SMR" id="P32282"/>
<dbReference type="GeneID" id="1258795"/>
<dbReference type="KEGG" id="vg:1258795"/>
<dbReference type="OrthoDB" id="2980at10239"/>
<dbReference type="Proteomes" id="UP000009087">
    <property type="component" value="Segment"/>
</dbReference>
<dbReference type="GO" id="GO:0005971">
    <property type="term" value="C:ribonucleoside-diphosphate reductase complex"/>
    <property type="evidence" value="ECO:0000314"/>
    <property type="project" value="CACAO"/>
</dbReference>
<dbReference type="GO" id="GO:0005524">
    <property type="term" value="F:ATP binding"/>
    <property type="evidence" value="ECO:0007669"/>
    <property type="project" value="UniProtKB-KW"/>
</dbReference>
<dbReference type="GO" id="GO:0004748">
    <property type="term" value="F:ribonucleoside-diphosphate reductase activity, thioredoxin disulfide as acceptor"/>
    <property type="evidence" value="ECO:0007669"/>
    <property type="project" value="UniProtKB-EC"/>
</dbReference>
<dbReference type="GO" id="GO:0009263">
    <property type="term" value="P:deoxyribonucleotide biosynthetic process"/>
    <property type="evidence" value="ECO:0007669"/>
    <property type="project" value="UniProtKB-KW"/>
</dbReference>
<dbReference type="FunFam" id="1.10.1650.20:FF:000001">
    <property type="entry name" value="Ribonucleoside-diphosphate reductase"/>
    <property type="match status" value="1"/>
</dbReference>
<dbReference type="Gene3D" id="1.10.1650.20">
    <property type="match status" value="1"/>
</dbReference>
<dbReference type="Gene3D" id="3.20.70.20">
    <property type="match status" value="1"/>
</dbReference>
<dbReference type="InterPro" id="IPR005144">
    <property type="entry name" value="ATP-cone_dom"/>
</dbReference>
<dbReference type="InterPro" id="IPR013346">
    <property type="entry name" value="NrdE_NrdA_C"/>
</dbReference>
<dbReference type="InterPro" id="IPR000788">
    <property type="entry name" value="RNR_lg_C"/>
</dbReference>
<dbReference type="InterPro" id="IPR013509">
    <property type="entry name" value="RNR_lsu_N"/>
</dbReference>
<dbReference type="InterPro" id="IPR008926">
    <property type="entry name" value="RNR_R1-su_N"/>
</dbReference>
<dbReference type="InterPro" id="IPR039718">
    <property type="entry name" value="Rrm1"/>
</dbReference>
<dbReference type="NCBIfam" id="TIGR02506">
    <property type="entry name" value="NrdE_NrdA"/>
    <property type="match status" value="1"/>
</dbReference>
<dbReference type="NCBIfam" id="NF006578">
    <property type="entry name" value="PRK09103.1"/>
    <property type="match status" value="1"/>
</dbReference>
<dbReference type="PANTHER" id="PTHR11573">
    <property type="entry name" value="RIBONUCLEOSIDE-DIPHOSPHATE REDUCTASE LARGE CHAIN"/>
    <property type="match status" value="1"/>
</dbReference>
<dbReference type="PANTHER" id="PTHR11573:SF6">
    <property type="entry name" value="RIBONUCLEOSIDE-DIPHOSPHATE REDUCTASE LARGE SUBUNIT"/>
    <property type="match status" value="1"/>
</dbReference>
<dbReference type="Pfam" id="PF03477">
    <property type="entry name" value="ATP-cone"/>
    <property type="match status" value="1"/>
</dbReference>
<dbReference type="Pfam" id="PF02867">
    <property type="entry name" value="Ribonuc_red_lgC"/>
    <property type="match status" value="1"/>
</dbReference>
<dbReference type="Pfam" id="PF00317">
    <property type="entry name" value="Ribonuc_red_lgN"/>
    <property type="match status" value="1"/>
</dbReference>
<dbReference type="PRINTS" id="PR01183">
    <property type="entry name" value="RIBORDTASEM1"/>
</dbReference>
<dbReference type="SUPFAM" id="SSF51998">
    <property type="entry name" value="PFL-like glycyl radical enzymes"/>
    <property type="match status" value="1"/>
</dbReference>
<dbReference type="SUPFAM" id="SSF48168">
    <property type="entry name" value="R1 subunit of ribonucleotide reductase, N-terminal domain"/>
    <property type="match status" value="1"/>
</dbReference>
<dbReference type="PROSITE" id="PS51161">
    <property type="entry name" value="ATP_CONE"/>
    <property type="match status" value="1"/>
</dbReference>
<dbReference type="PROSITE" id="PS00089">
    <property type="entry name" value="RIBORED_LARGE"/>
    <property type="match status" value="1"/>
</dbReference>
<evidence type="ECO:0000250" key="1"/>
<evidence type="ECO:0000255" key="2">
    <source>
        <dbReference type="PROSITE-ProRule" id="PRU00492"/>
    </source>
</evidence>
<evidence type="ECO:0000256" key="3">
    <source>
        <dbReference type="SAM" id="MobiDB-lite"/>
    </source>
</evidence>
<evidence type="ECO:0000305" key="4"/>
<proteinExistence type="inferred from homology"/>
<reference key="1">
    <citation type="journal article" date="1988" name="J. Biol. Chem.">
        <title>Total sequence, flanking regions, and transcripts of bacteriophage T4 nrdA gene, coding for alpha chain of ribonucleoside diphosphate reductase.</title>
        <authorList>
            <person name="Tseng M.J."/>
            <person name="Hilfinger J.M."/>
            <person name="Walsh A."/>
            <person name="Greenberg G.R."/>
        </authorList>
    </citation>
    <scope>NUCLEOTIDE SEQUENCE [GENOMIC DNA]</scope>
</reference>
<reference key="2">
    <citation type="journal article" date="2003" name="Microbiol. Mol. Biol. Rev.">
        <title>Bacteriophage T4 genome.</title>
        <authorList>
            <person name="Miller E.S."/>
            <person name="Kutter E."/>
            <person name="Mosig G."/>
            <person name="Arisaka F."/>
            <person name="Kunisawa T."/>
            <person name="Ruger W."/>
        </authorList>
    </citation>
    <scope>NUCLEOTIDE SEQUENCE [LARGE SCALE GENOMIC DNA]</scope>
</reference>
<reference key="3">
    <citation type="journal article" date="1987" name="Gene">
        <title>Localization of the T4 phage ribonucleotide reductase B1 subunit gene and the nucleotide sequence of its upstream and 5' coding regions.</title>
        <authorList>
            <person name="Chu F.K."/>
            <person name="Maley G.F."/>
            <person name="Wang A.M."/>
            <person name="Maley F."/>
        </authorList>
    </citation>
    <scope>NUCLEOTIDE SEQUENCE [GENOMIC DNA] OF 1-66</scope>
</reference>